<keyword id="KW-0997">Cell inner membrane</keyword>
<keyword id="KW-1003">Cell membrane</keyword>
<keyword id="KW-0472">Membrane</keyword>
<keyword id="KW-0520">NAD</keyword>
<keyword id="KW-0874">Quinone</keyword>
<keyword id="KW-1278">Translocase</keyword>
<keyword id="KW-0813">Transport</keyword>
<keyword id="KW-0830">Ubiquinone</keyword>
<protein>
    <recommendedName>
        <fullName evidence="1">NADH-quinone oxidoreductase subunit D</fullName>
        <ecNumber evidence="1">7.1.1.-</ecNumber>
    </recommendedName>
    <alternativeName>
        <fullName evidence="1">NADH dehydrogenase I subunit D</fullName>
    </alternativeName>
    <alternativeName>
        <fullName evidence="1">NDH-1 subunit D</fullName>
    </alternativeName>
</protein>
<feature type="chain" id="PRO_0000371858" description="NADH-quinone oxidoreductase subunit D">
    <location>
        <begin position="1"/>
        <end position="417"/>
    </location>
</feature>
<gene>
    <name evidence="1" type="primary">nuoD</name>
    <name type="ordered locus">RALTA_A1037</name>
</gene>
<organism>
    <name type="scientific">Cupriavidus taiwanensis (strain DSM 17343 / BCRC 17206 / CCUG 44338 / CIP 107171 / LMG 19424 / R1)</name>
    <name type="common">Ralstonia taiwanensis (strain LMG 19424)</name>
    <dbReference type="NCBI Taxonomy" id="977880"/>
    <lineage>
        <taxon>Bacteria</taxon>
        <taxon>Pseudomonadati</taxon>
        <taxon>Pseudomonadota</taxon>
        <taxon>Betaproteobacteria</taxon>
        <taxon>Burkholderiales</taxon>
        <taxon>Burkholderiaceae</taxon>
        <taxon>Cupriavidus</taxon>
    </lineage>
</organism>
<comment type="function">
    <text evidence="1">NDH-1 shuttles electrons from NADH, via FMN and iron-sulfur (Fe-S) centers, to quinones in the respiratory chain. The immediate electron acceptor for the enzyme in this species is believed to be ubiquinone. Couples the redox reaction to proton translocation (for every two electrons transferred, four hydrogen ions are translocated across the cytoplasmic membrane), and thus conserves the redox energy in a proton gradient.</text>
</comment>
<comment type="catalytic activity">
    <reaction evidence="1">
        <text>a quinone + NADH + 5 H(+)(in) = a quinol + NAD(+) + 4 H(+)(out)</text>
        <dbReference type="Rhea" id="RHEA:57888"/>
        <dbReference type="ChEBI" id="CHEBI:15378"/>
        <dbReference type="ChEBI" id="CHEBI:24646"/>
        <dbReference type="ChEBI" id="CHEBI:57540"/>
        <dbReference type="ChEBI" id="CHEBI:57945"/>
        <dbReference type="ChEBI" id="CHEBI:132124"/>
    </reaction>
</comment>
<comment type="subunit">
    <text evidence="1">NDH-1 is composed of 14 different subunits. Subunits NuoB, C, D, E, F, and G constitute the peripheral sector of the complex.</text>
</comment>
<comment type="subcellular location">
    <subcellularLocation>
        <location evidence="1">Cell inner membrane</location>
        <topology evidence="1">Peripheral membrane protein</topology>
        <orientation evidence="1">Cytoplasmic side</orientation>
    </subcellularLocation>
</comment>
<comment type="similarity">
    <text evidence="1">Belongs to the complex I 49 kDa subunit family.</text>
</comment>
<dbReference type="EC" id="7.1.1.-" evidence="1"/>
<dbReference type="EMBL" id="CU633749">
    <property type="protein sequence ID" value="CAQ69002.1"/>
    <property type="molecule type" value="Genomic_DNA"/>
</dbReference>
<dbReference type="RefSeq" id="WP_012352332.1">
    <property type="nucleotide sequence ID" value="NC_010528.1"/>
</dbReference>
<dbReference type="SMR" id="B3R3X0"/>
<dbReference type="GeneID" id="29762387"/>
<dbReference type="KEGG" id="cti:RALTA_A1037"/>
<dbReference type="eggNOG" id="COG0649">
    <property type="taxonomic scope" value="Bacteria"/>
</dbReference>
<dbReference type="HOGENOM" id="CLU_015134_1_1_4"/>
<dbReference type="BioCyc" id="CTAI977880:RALTA_RS04930-MONOMER"/>
<dbReference type="Proteomes" id="UP000001692">
    <property type="component" value="Chromosome 1"/>
</dbReference>
<dbReference type="GO" id="GO:0005886">
    <property type="term" value="C:plasma membrane"/>
    <property type="evidence" value="ECO:0007669"/>
    <property type="project" value="UniProtKB-SubCell"/>
</dbReference>
<dbReference type="GO" id="GO:0051287">
    <property type="term" value="F:NAD binding"/>
    <property type="evidence" value="ECO:0007669"/>
    <property type="project" value="InterPro"/>
</dbReference>
<dbReference type="GO" id="GO:0050136">
    <property type="term" value="F:NADH:ubiquinone reductase (non-electrogenic) activity"/>
    <property type="evidence" value="ECO:0007669"/>
    <property type="project" value="UniProtKB-UniRule"/>
</dbReference>
<dbReference type="GO" id="GO:0048038">
    <property type="term" value="F:quinone binding"/>
    <property type="evidence" value="ECO:0007669"/>
    <property type="project" value="UniProtKB-KW"/>
</dbReference>
<dbReference type="FunFam" id="1.10.645.10:FF:000005">
    <property type="entry name" value="NADH-quinone oxidoreductase subunit D"/>
    <property type="match status" value="1"/>
</dbReference>
<dbReference type="Gene3D" id="1.10.645.10">
    <property type="entry name" value="Cytochrome-c3 Hydrogenase, chain B"/>
    <property type="match status" value="1"/>
</dbReference>
<dbReference type="HAMAP" id="MF_01358">
    <property type="entry name" value="NDH1_NuoD"/>
    <property type="match status" value="1"/>
</dbReference>
<dbReference type="InterPro" id="IPR001135">
    <property type="entry name" value="NADH_Q_OxRdtase_suD"/>
</dbReference>
<dbReference type="InterPro" id="IPR014029">
    <property type="entry name" value="NADH_UbQ_OxRdtase_49kDa_CS"/>
</dbReference>
<dbReference type="InterPro" id="IPR022885">
    <property type="entry name" value="NDH1_su_D/H"/>
</dbReference>
<dbReference type="InterPro" id="IPR029014">
    <property type="entry name" value="NiFe-Hase_large"/>
</dbReference>
<dbReference type="NCBIfam" id="TIGR01962">
    <property type="entry name" value="NuoD"/>
    <property type="match status" value="1"/>
</dbReference>
<dbReference type="NCBIfam" id="NF004739">
    <property type="entry name" value="PRK06075.1"/>
    <property type="match status" value="1"/>
</dbReference>
<dbReference type="PANTHER" id="PTHR11993:SF10">
    <property type="entry name" value="NADH DEHYDROGENASE [UBIQUINONE] IRON-SULFUR PROTEIN 2, MITOCHONDRIAL"/>
    <property type="match status" value="1"/>
</dbReference>
<dbReference type="PANTHER" id="PTHR11993">
    <property type="entry name" value="NADH-UBIQUINONE OXIDOREDUCTASE 49 KDA SUBUNIT"/>
    <property type="match status" value="1"/>
</dbReference>
<dbReference type="Pfam" id="PF00346">
    <property type="entry name" value="Complex1_49kDa"/>
    <property type="match status" value="1"/>
</dbReference>
<dbReference type="SUPFAM" id="SSF56762">
    <property type="entry name" value="HydB/Nqo4-like"/>
    <property type="match status" value="1"/>
</dbReference>
<dbReference type="PROSITE" id="PS00535">
    <property type="entry name" value="COMPLEX1_49K"/>
    <property type="match status" value="1"/>
</dbReference>
<name>NUOD_CUPTR</name>
<evidence type="ECO:0000255" key="1">
    <source>
        <dbReference type="HAMAP-Rule" id="MF_01358"/>
    </source>
</evidence>
<proteinExistence type="inferred from homology"/>
<accession>B3R3X0</accession>
<reference key="1">
    <citation type="journal article" date="2008" name="Genome Res.">
        <title>Genome sequence of the beta-rhizobium Cupriavidus taiwanensis and comparative genomics of rhizobia.</title>
        <authorList>
            <person name="Amadou C."/>
            <person name="Pascal G."/>
            <person name="Mangenot S."/>
            <person name="Glew M."/>
            <person name="Bontemps C."/>
            <person name="Capela D."/>
            <person name="Carrere S."/>
            <person name="Cruveiller S."/>
            <person name="Dossat C."/>
            <person name="Lajus A."/>
            <person name="Marchetti M."/>
            <person name="Poinsot V."/>
            <person name="Rouy Z."/>
            <person name="Servin B."/>
            <person name="Saad M."/>
            <person name="Schenowitz C."/>
            <person name="Barbe V."/>
            <person name="Batut J."/>
            <person name="Medigue C."/>
            <person name="Masson-Boivin C."/>
        </authorList>
    </citation>
    <scope>NUCLEOTIDE SEQUENCE [LARGE SCALE GENOMIC DNA]</scope>
    <source>
        <strain>DSM 17343 / BCRC 17206 / CCUG 44338 / CIP 107171 / LMG 19424 / R1</strain>
    </source>
</reference>
<sequence length="417" mass="47698">MADIKNYTLNFGPQHPAAHGVLRLVLELDGEVIQRADPHIGLLHRATEKLAEQKTWIQSVPYMDRLDYVSMMVNEHAYVMAIERLLGLEVPVRAQYIRVMFDEITRLLNHLMWIGSHALDVGAMAVFLYAFREREDMFDMYEAVSGARMHAAYYRPGGVYRDLPDTMPQYRASKVHNERAIKAMNEARSGSLLDFIEDFTNRFPKYVDEYETLLTDNRIWKQRLVDIGVVSPERALQMGFTGPMLRGSGIAWDLRKKQPYEVYDKLDFDVPVGVGGDCYARYLVRVEEMRQSNRIIKQCVDWLRRNPGPVITENHKVAPPSRVDMKSNMEELIHHFKLFTEGIHVPEGEAYAAVEHPKGEFGIYAISDGANKPYRLKIRAPGFAHLAALDEMAKGHMIADAVTIIGTQDIVFGEIDR</sequence>